<feature type="chain" id="PRO_0000427977" description="Polyphosphate glucokinase">
    <location>
        <begin position="1"/>
        <end position="265"/>
    </location>
</feature>
<feature type="region of interest" description="Disordered" evidence="3">
    <location>
        <begin position="1"/>
        <end position="22"/>
    </location>
</feature>
<feature type="compositionally biased region" description="Polar residues" evidence="3">
    <location>
        <begin position="1"/>
        <end position="18"/>
    </location>
</feature>
<feature type="binding site" evidence="2">
    <location>
        <begin position="24"/>
        <end position="29"/>
    </location>
    <ligand>
        <name>ATP</name>
        <dbReference type="ChEBI" id="CHEBI:30616"/>
    </ligand>
</feature>
<accession>P9WIN0</accession>
<accession>L0TAD9</accession>
<accession>O07204</accession>
<accession>Q59568</accession>
<organism>
    <name type="scientific">Mycobacterium tuberculosis (strain CDC 1551 / Oshkosh)</name>
    <dbReference type="NCBI Taxonomy" id="83331"/>
    <lineage>
        <taxon>Bacteria</taxon>
        <taxon>Bacillati</taxon>
        <taxon>Actinomycetota</taxon>
        <taxon>Actinomycetes</taxon>
        <taxon>Mycobacteriales</taxon>
        <taxon>Mycobacteriaceae</taxon>
        <taxon>Mycobacterium</taxon>
        <taxon>Mycobacterium tuberculosis complex</taxon>
    </lineage>
</organism>
<evidence type="ECO:0000250" key="1">
    <source>
        <dbReference type="UniProtKB" id="A5U654"/>
    </source>
</evidence>
<evidence type="ECO:0000255" key="2"/>
<evidence type="ECO:0000256" key="3">
    <source>
        <dbReference type="SAM" id="MobiDB-lite"/>
    </source>
</evidence>
<evidence type="ECO:0000305" key="4"/>
<dbReference type="EC" id="2.7.1.63"/>
<dbReference type="EC" id="2.7.1.2"/>
<dbReference type="EMBL" id="AE000516">
    <property type="protein sequence ID" value="AAK47091.1"/>
    <property type="molecule type" value="Genomic_DNA"/>
</dbReference>
<dbReference type="PIR" id="A70531">
    <property type="entry name" value="A70531"/>
</dbReference>
<dbReference type="RefSeq" id="WP_003899438.1">
    <property type="nucleotide sequence ID" value="NZ_KK341227.1"/>
</dbReference>
<dbReference type="SMR" id="P9WIN0"/>
<dbReference type="KEGG" id="mtc:MT2776"/>
<dbReference type="PATRIC" id="fig|83331.31.peg.2989"/>
<dbReference type="HOGENOM" id="CLU_065796_0_0_11"/>
<dbReference type="Proteomes" id="UP000001020">
    <property type="component" value="Chromosome"/>
</dbReference>
<dbReference type="GO" id="GO:0005524">
    <property type="term" value="F:ATP binding"/>
    <property type="evidence" value="ECO:0007669"/>
    <property type="project" value="UniProtKB-KW"/>
</dbReference>
<dbReference type="GO" id="GO:0004340">
    <property type="term" value="F:glucokinase activity"/>
    <property type="evidence" value="ECO:0007669"/>
    <property type="project" value="UniProtKB-EC"/>
</dbReference>
<dbReference type="GO" id="GO:0047330">
    <property type="term" value="F:polyphosphate-glucose phosphotransferase activity"/>
    <property type="evidence" value="ECO:0007669"/>
    <property type="project" value="UniProtKB-EC"/>
</dbReference>
<dbReference type="CDD" id="cd24058">
    <property type="entry name" value="ASKHA_NBD_ROK_PPGK"/>
    <property type="match status" value="1"/>
</dbReference>
<dbReference type="FunFam" id="3.30.420.40:FF:000412">
    <property type="entry name" value="Polyphosphate glucokinase"/>
    <property type="match status" value="1"/>
</dbReference>
<dbReference type="FunFam" id="3.30.420.40:FF:000443">
    <property type="entry name" value="Polyphosphate glucokinase"/>
    <property type="match status" value="1"/>
</dbReference>
<dbReference type="Gene3D" id="3.30.420.40">
    <property type="match status" value="2"/>
</dbReference>
<dbReference type="InterPro" id="IPR043129">
    <property type="entry name" value="ATPase_NBD"/>
</dbReference>
<dbReference type="InterPro" id="IPR000600">
    <property type="entry name" value="ROK"/>
</dbReference>
<dbReference type="NCBIfam" id="NF045942">
    <property type="entry name" value="PolPhglucPhase"/>
    <property type="match status" value="1"/>
</dbReference>
<dbReference type="PANTHER" id="PTHR18964:SF146">
    <property type="entry name" value="POLYPHOSPHATE GLUCOKINASE"/>
    <property type="match status" value="1"/>
</dbReference>
<dbReference type="PANTHER" id="PTHR18964">
    <property type="entry name" value="ROK (REPRESSOR, ORF, KINASE) FAMILY"/>
    <property type="match status" value="1"/>
</dbReference>
<dbReference type="Pfam" id="PF00480">
    <property type="entry name" value="ROK"/>
    <property type="match status" value="1"/>
</dbReference>
<dbReference type="SUPFAM" id="SSF53067">
    <property type="entry name" value="Actin-like ATPase domain"/>
    <property type="match status" value="1"/>
</dbReference>
<reference key="1">
    <citation type="journal article" date="2002" name="J. Bacteriol.">
        <title>Whole-genome comparison of Mycobacterium tuberculosis clinical and laboratory strains.</title>
        <authorList>
            <person name="Fleischmann R.D."/>
            <person name="Alland D."/>
            <person name="Eisen J.A."/>
            <person name="Carpenter L."/>
            <person name="White O."/>
            <person name="Peterson J.D."/>
            <person name="DeBoy R.T."/>
            <person name="Dodson R.J."/>
            <person name="Gwinn M.L."/>
            <person name="Haft D.H."/>
            <person name="Hickey E.K."/>
            <person name="Kolonay J.F."/>
            <person name="Nelson W.C."/>
            <person name="Umayam L.A."/>
            <person name="Ermolaeva M.D."/>
            <person name="Salzberg S.L."/>
            <person name="Delcher A."/>
            <person name="Utterback T.R."/>
            <person name="Weidman J.F."/>
            <person name="Khouri H.M."/>
            <person name="Gill J."/>
            <person name="Mikula A."/>
            <person name="Bishai W."/>
            <person name="Jacobs W.R. Jr."/>
            <person name="Venter J.C."/>
            <person name="Fraser C.M."/>
        </authorList>
    </citation>
    <scope>NUCLEOTIDE SEQUENCE [LARGE SCALE GENOMIC DNA]</scope>
    <source>
        <strain>CDC 1551 / Oshkosh</strain>
    </source>
</reference>
<sequence>MTSTGPETSETPGATTQRHGFGIDVGGSGIKGGIVDLDTGQLIGDRIKLLTPQPATPLAVAKTIAEVVNGFGWRGPLGVTYPGVVTHGVVRTAANVDKSWIGTNARDTIGAELGGQQVTILNDADAAGLAETRYGAGKNSPGLVVLLTFGTGIGSAVIHNGTLIPNTEFGHLEVGGKEAEERAASSVKEKNDWTYPKWAKQVTRVLIAIENAIWPDLFIAGGGISRKADKWVPLLENRTPVVPAALQNTAGIVGAAMASVADTTH</sequence>
<protein>
    <recommendedName>
        <fullName>Polyphosphate glucokinase</fullName>
        <ecNumber>2.7.1.63</ecNumber>
    </recommendedName>
    <alternativeName>
        <fullName>ATP-dependent glucokinase</fullName>
        <ecNumber>2.7.1.2</ecNumber>
    </alternativeName>
    <alternativeName>
        <fullName>Polyphosphate--glucose phosphotransferase</fullName>
    </alternativeName>
</protein>
<keyword id="KW-0067">ATP-binding</keyword>
<keyword id="KW-0418">Kinase</keyword>
<keyword id="KW-0547">Nucleotide-binding</keyword>
<keyword id="KW-1185">Reference proteome</keyword>
<keyword id="KW-0808">Transferase</keyword>
<name>PPGK_MYCTO</name>
<proteinExistence type="inferred from homology"/>
<comment type="function">
    <text evidence="1">Catalyzes the phosphorylation of glucose using polyphosphate or ATP as the phosphoryl donor. Polyphosphate, rather than ATP, seems to be the major phosphate donor for the enzyme in M.tuberculosis.</text>
</comment>
<comment type="catalytic activity">
    <reaction evidence="1">
        <text>[phosphate](n) + D-glucose = [phosphate](n-1) + D-glucose 6-phosphate + H(+)</text>
        <dbReference type="Rhea" id="RHEA:22036"/>
        <dbReference type="Rhea" id="RHEA-COMP:9859"/>
        <dbReference type="Rhea" id="RHEA-COMP:14279"/>
        <dbReference type="ChEBI" id="CHEBI:4167"/>
        <dbReference type="ChEBI" id="CHEBI:15378"/>
        <dbReference type="ChEBI" id="CHEBI:16838"/>
        <dbReference type="ChEBI" id="CHEBI:61548"/>
        <dbReference type="EC" id="2.7.1.63"/>
    </reaction>
</comment>
<comment type="catalytic activity">
    <reaction evidence="1">
        <text>D-glucose + ATP = D-glucose 6-phosphate + ADP + H(+)</text>
        <dbReference type="Rhea" id="RHEA:17825"/>
        <dbReference type="ChEBI" id="CHEBI:4167"/>
        <dbReference type="ChEBI" id="CHEBI:15378"/>
        <dbReference type="ChEBI" id="CHEBI:30616"/>
        <dbReference type="ChEBI" id="CHEBI:61548"/>
        <dbReference type="ChEBI" id="CHEBI:456216"/>
        <dbReference type="EC" id="2.7.1.2"/>
    </reaction>
</comment>
<comment type="subunit">
    <text evidence="1">Homodimer.</text>
</comment>
<comment type="miscellaneous">
    <text evidence="1">The poly(P)- and ATP-dependent glucokinase reactions both follow an ordered Bi-Bi mechanism, with glucose being the second substrate to bind and glucose 6-phosphate being released last. The mechanism of poly(P) utilization is not strictly processive and is most likely nonprocessive, where there is dissociation of poly(P) prior to complete utilization.</text>
</comment>
<comment type="similarity">
    <text evidence="4">Belongs to the ROK (NagC/XylR) family.</text>
</comment>
<gene>
    <name type="primary">ppgK</name>
    <name type="ordered locus">MT2776</name>
</gene>